<gene>
    <name evidence="1" type="primary">rlmH</name>
    <name type="ordered locus">BVU_2374</name>
</gene>
<keyword id="KW-0963">Cytoplasm</keyword>
<keyword id="KW-0489">Methyltransferase</keyword>
<keyword id="KW-0698">rRNA processing</keyword>
<keyword id="KW-0949">S-adenosyl-L-methionine</keyword>
<keyword id="KW-0808">Transferase</keyword>
<reference key="1">
    <citation type="journal article" date="2007" name="PLoS Biol.">
        <title>Evolution of symbiotic bacteria in the distal human intestine.</title>
        <authorList>
            <person name="Xu J."/>
            <person name="Mahowald M.A."/>
            <person name="Ley R.E."/>
            <person name="Lozupone C.A."/>
            <person name="Hamady M."/>
            <person name="Martens E.C."/>
            <person name="Henrissat B."/>
            <person name="Coutinho P.M."/>
            <person name="Minx P."/>
            <person name="Latreille P."/>
            <person name="Cordum H."/>
            <person name="Van Brunt A."/>
            <person name="Kim K."/>
            <person name="Fulton R.S."/>
            <person name="Fulton L.A."/>
            <person name="Clifton S.W."/>
            <person name="Wilson R.K."/>
            <person name="Knight R.D."/>
            <person name="Gordon J.I."/>
        </authorList>
    </citation>
    <scope>NUCLEOTIDE SEQUENCE [LARGE SCALE GENOMIC DNA]</scope>
    <source>
        <strain>ATCC 8482 / DSM 1447 / JCM 5826 / CCUG 4940 / NBRC 14291 / NCTC 11154</strain>
    </source>
</reference>
<feature type="chain" id="PRO_1000061758" description="Ribosomal RNA large subunit methyltransferase H">
    <location>
        <begin position="1"/>
        <end position="157"/>
    </location>
</feature>
<feature type="binding site" evidence="1">
    <location>
        <position position="73"/>
    </location>
    <ligand>
        <name>S-adenosyl-L-methionine</name>
        <dbReference type="ChEBI" id="CHEBI:59789"/>
    </ligand>
</feature>
<feature type="binding site" evidence="1">
    <location>
        <position position="105"/>
    </location>
    <ligand>
        <name>S-adenosyl-L-methionine</name>
        <dbReference type="ChEBI" id="CHEBI:59789"/>
    </ligand>
</feature>
<feature type="binding site" evidence="1">
    <location>
        <begin position="124"/>
        <end position="129"/>
    </location>
    <ligand>
        <name>S-adenosyl-L-methionine</name>
        <dbReference type="ChEBI" id="CHEBI:59789"/>
    </ligand>
</feature>
<sequence>MKFTLLVVGRTVEKHYITAINDYVERTKHFISFDMEVIPELKNTKNLSMEQQKEKEGELILKALLPGDVVVLLDEHGKEFRSVEFANWIERKMHTVNKRLVFIIGGPYGFAPKIYDAAQEKISLSKMTFSHQMIRLIFVEQLYRAMTILNNGPYHHE</sequence>
<accession>A6L2W9</accession>
<protein>
    <recommendedName>
        <fullName evidence="1">Ribosomal RNA large subunit methyltransferase H</fullName>
        <ecNumber evidence="1">2.1.1.177</ecNumber>
    </recommendedName>
    <alternativeName>
        <fullName evidence="1">23S rRNA (pseudouridine1915-N3)-methyltransferase</fullName>
    </alternativeName>
    <alternativeName>
        <fullName evidence="1">23S rRNA m3Psi1915 methyltransferase</fullName>
    </alternativeName>
    <alternativeName>
        <fullName evidence="1">rRNA (pseudouridine-N3-)-methyltransferase RlmH</fullName>
    </alternativeName>
</protein>
<comment type="function">
    <text evidence="1">Specifically methylates the pseudouridine at position 1915 (m3Psi1915) in 23S rRNA.</text>
</comment>
<comment type="catalytic activity">
    <reaction evidence="1">
        <text>pseudouridine(1915) in 23S rRNA + S-adenosyl-L-methionine = N(3)-methylpseudouridine(1915) in 23S rRNA + S-adenosyl-L-homocysteine + H(+)</text>
        <dbReference type="Rhea" id="RHEA:42752"/>
        <dbReference type="Rhea" id="RHEA-COMP:10221"/>
        <dbReference type="Rhea" id="RHEA-COMP:10222"/>
        <dbReference type="ChEBI" id="CHEBI:15378"/>
        <dbReference type="ChEBI" id="CHEBI:57856"/>
        <dbReference type="ChEBI" id="CHEBI:59789"/>
        <dbReference type="ChEBI" id="CHEBI:65314"/>
        <dbReference type="ChEBI" id="CHEBI:74486"/>
        <dbReference type="EC" id="2.1.1.177"/>
    </reaction>
</comment>
<comment type="subunit">
    <text evidence="1">Homodimer.</text>
</comment>
<comment type="subcellular location">
    <subcellularLocation>
        <location evidence="1">Cytoplasm</location>
    </subcellularLocation>
</comment>
<comment type="similarity">
    <text evidence="1">Belongs to the RNA methyltransferase RlmH family.</text>
</comment>
<evidence type="ECO:0000255" key="1">
    <source>
        <dbReference type="HAMAP-Rule" id="MF_00658"/>
    </source>
</evidence>
<name>RLMH_PHOV8</name>
<organism>
    <name type="scientific">Phocaeicola vulgatus (strain ATCC 8482 / DSM 1447 / JCM 5826 / CCUG 4940 / NBRC 14291 / NCTC 11154)</name>
    <name type="common">Bacteroides vulgatus</name>
    <dbReference type="NCBI Taxonomy" id="435590"/>
    <lineage>
        <taxon>Bacteria</taxon>
        <taxon>Pseudomonadati</taxon>
        <taxon>Bacteroidota</taxon>
        <taxon>Bacteroidia</taxon>
        <taxon>Bacteroidales</taxon>
        <taxon>Bacteroidaceae</taxon>
        <taxon>Phocaeicola</taxon>
    </lineage>
</organism>
<proteinExistence type="inferred from homology"/>
<dbReference type="EC" id="2.1.1.177" evidence="1"/>
<dbReference type="EMBL" id="CP000139">
    <property type="protein sequence ID" value="ABR40033.1"/>
    <property type="molecule type" value="Genomic_DNA"/>
</dbReference>
<dbReference type="RefSeq" id="WP_011965575.1">
    <property type="nucleotide sequence ID" value="NZ_JANSWM010000034.1"/>
</dbReference>
<dbReference type="SMR" id="A6L2W9"/>
<dbReference type="STRING" id="435590.BVU_2374"/>
<dbReference type="PaxDb" id="435590-BVU_2374"/>
<dbReference type="GeneID" id="82154618"/>
<dbReference type="KEGG" id="bvu:BVU_2374"/>
<dbReference type="eggNOG" id="COG1576">
    <property type="taxonomic scope" value="Bacteria"/>
</dbReference>
<dbReference type="HOGENOM" id="CLU_100552_2_0_10"/>
<dbReference type="BioCyc" id="BVUL435590:G1G59-2469-MONOMER"/>
<dbReference type="Proteomes" id="UP000002861">
    <property type="component" value="Chromosome"/>
</dbReference>
<dbReference type="GO" id="GO:0005737">
    <property type="term" value="C:cytoplasm"/>
    <property type="evidence" value="ECO:0007669"/>
    <property type="project" value="UniProtKB-SubCell"/>
</dbReference>
<dbReference type="GO" id="GO:0070038">
    <property type="term" value="F:rRNA (pseudouridine-N3-)-methyltransferase activity"/>
    <property type="evidence" value="ECO:0007669"/>
    <property type="project" value="UniProtKB-UniRule"/>
</dbReference>
<dbReference type="CDD" id="cd18081">
    <property type="entry name" value="RlmH-like"/>
    <property type="match status" value="1"/>
</dbReference>
<dbReference type="Gene3D" id="3.40.1280.10">
    <property type="match status" value="1"/>
</dbReference>
<dbReference type="HAMAP" id="MF_00658">
    <property type="entry name" value="23SrRNA_methyltr_H"/>
    <property type="match status" value="1"/>
</dbReference>
<dbReference type="InterPro" id="IPR029028">
    <property type="entry name" value="Alpha/beta_knot_MTases"/>
</dbReference>
<dbReference type="InterPro" id="IPR003742">
    <property type="entry name" value="RlmH-like"/>
</dbReference>
<dbReference type="InterPro" id="IPR029026">
    <property type="entry name" value="tRNA_m1G_MTases_N"/>
</dbReference>
<dbReference type="NCBIfam" id="NF000990">
    <property type="entry name" value="PRK00103.2-4"/>
    <property type="match status" value="1"/>
</dbReference>
<dbReference type="PANTHER" id="PTHR33603">
    <property type="entry name" value="METHYLTRANSFERASE"/>
    <property type="match status" value="1"/>
</dbReference>
<dbReference type="PANTHER" id="PTHR33603:SF1">
    <property type="entry name" value="RIBOSOMAL RNA LARGE SUBUNIT METHYLTRANSFERASE H"/>
    <property type="match status" value="1"/>
</dbReference>
<dbReference type="Pfam" id="PF02590">
    <property type="entry name" value="SPOUT_MTase"/>
    <property type="match status" value="1"/>
</dbReference>
<dbReference type="PIRSF" id="PIRSF004505">
    <property type="entry name" value="MT_bac"/>
    <property type="match status" value="1"/>
</dbReference>
<dbReference type="SUPFAM" id="SSF75217">
    <property type="entry name" value="alpha/beta knot"/>
    <property type="match status" value="1"/>
</dbReference>